<reference key="1">
    <citation type="journal article" date="2008" name="Proc. Natl. Acad. Sci. U.S.A.">
        <title>Complete genome of the uncultured termite group 1 bacteria in a single host protist cell.</title>
        <authorList>
            <person name="Hongoh Y."/>
            <person name="Sharma V.K."/>
            <person name="Prakash T."/>
            <person name="Noda S."/>
            <person name="Taylor T.D."/>
            <person name="Kudo T."/>
            <person name="Sakaki Y."/>
            <person name="Toyoda A."/>
            <person name="Hattori M."/>
            <person name="Ohkuma M."/>
        </authorList>
    </citation>
    <scope>NUCLEOTIDE SEQUENCE [LARGE SCALE GENOMIC DNA]</scope>
</reference>
<feature type="chain" id="PRO_1000100081" description="Dihydroorotase">
    <location>
        <begin position="1"/>
        <end position="422"/>
    </location>
</feature>
<feature type="active site" evidence="1">
    <location>
        <position position="302"/>
    </location>
</feature>
<feature type="binding site" evidence="1">
    <location>
        <position position="57"/>
    </location>
    <ligand>
        <name>Zn(2+)</name>
        <dbReference type="ChEBI" id="CHEBI:29105"/>
        <label>1</label>
    </ligand>
</feature>
<feature type="binding site" evidence="1">
    <location>
        <begin position="59"/>
        <end position="61"/>
    </location>
    <ligand>
        <name>substrate</name>
    </ligand>
</feature>
<feature type="binding site" evidence="1">
    <location>
        <position position="59"/>
    </location>
    <ligand>
        <name>Zn(2+)</name>
        <dbReference type="ChEBI" id="CHEBI:29105"/>
        <label>1</label>
    </ligand>
</feature>
<feature type="binding site" evidence="1">
    <location>
        <position position="91"/>
    </location>
    <ligand>
        <name>substrate</name>
    </ligand>
</feature>
<feature type="binding site" evidence="1">
    <location>
        <position position="149"/>
    </location>
    <ligand>
        <name>Zn(2+)</name>
        <dbReference type="ChEBI" id="CHEBI:29105"/>
        <label>1</label>
    </ligand>
</feature>
<feature type="binding site" evidence="1">
    <location>
        <position position="149"/>
    </location>
    <ligand>
        <name>Zn(2+)</name>
        <dbReference type="ChEBI" id="CHEBI:29105"/>
        <label>2</label>
    </ligand>
</feature>
<feature type="binding site" evidence="1">
    <location>
        <position position="176"/>
    </location>
    <ligand>
        <name>Zn(2+)</name>
        <dbReference type="ChEBI" id="CHEBI:29105"/>
        <label>2</label>
    </ligand>
</feature>
<feature type="binding site" evidence="1">
    <location>
        <position position="229"/>
    </location>
    <ligand>
        <name>Zn(2+)</name>
        <dbReference type="ChEBI" id="CHEBI:29105"/>
        <label>2</label>
    </ligand>
</feature>
<feature type="binding site" evidence="1">
    <location>
        <position position="275"/>
    </location>
    <ligand>
        <name>substrate</name>
    </ligand>
</feature>
<feature type="binding site" evidence="1">
    <location>
        <position position="302"/>
    </location>
    <ligand>
        <name>Zn(2+)</name>
        <dbReference type="ChEBI" id="CHEBI:29105"/>
        <label>1</label>
    </ligand>
</feature>
<feature type="binding site" evidence="1">
    <location>
        <position position="306"/>
    </location>
    <ligand>
        <name>substrate</name>
    </ligand>
</feature>
<feature type="binding site" evidence="1">
    <location>
        <begin position="320"/>
        <end position="321"/>
    </location>
    <ligand>
        <name>substrate</name>
    </ligand>
</feature>
<proteinExistence type="inferred from homology"/>
<evidence type="ECO:0000255" key="1">
    <source>
        <dbReference type="HAMAP-Rule" id="MF_00220"/>
    </source>
</evidence>
<keyword id="KW-0378">Hydrolase</keyword>
<keyword id="KW-0479">Metal-binding</keyword>
<keyword id="KW-0665">Pyrimidine biosynthesis</keyword>
<keyword id="KW-0862">Zinc</keyword>
<organism>
    <name type="scientific">Endomicrobium trichonymphae</name>
    <dbReference type="NCBI Taxonomy" id="1408204"/>
    <lineage>
        <taxon>Bacteria</taxon>
        <taxon>Pseudomonadati</taxon>
        <taxon>Elusimicrobiota</taxon>
        <taxon>Endomicrobiia</taxon>
        <taxon>Endomicrobiales</taxon>
        <taxon>Endomicrobiaceae</taxon>
        <taxon>Candidatus Endomicrobiellum</taxon>
    </lineage>
</organism>
<accession>B1GYY7</accession>
<name>PYRC_ENDTX</name>
<sequence>MRLQIKDIKIIDPLQNRDLIGDIFVENGRIVSKFLGDADKVVDGRGKIAVPGLIDIHSHLREPGEERKETIYTGTRSAAKGGITTVFCMPNTKPVIDNAPTVEFVLLKAQKEGLVNVLPIGCATKGSHGVEISEIGVLKKAGIVAVSDDGLPIANSQIMRRTLEYTKMFKLPVISHGEDKELSKNGVMNEGKNSMILGLRGIPKQAEEVIISRDIMLAELTEGYLHIAHVSTAGSVELIRQAKKKSIKVTAETCPHYFTLTDDIVKGYNTNTKMNPPLRRQEDVDAIKQGLADGTIDCIATDHAPHMEEEKNREFDLAPFGIIGFETILSLILNELVDSGVLSLSKALSKMTSNPAKIFNLEGRGTLKEGNIADITIIDMKYSYEFKKENIVSKSKNSPFIGRKFKGGAVMTIVGGNIVWQV</sequence>
<gene>
    <name evidence="1" type="primary">pyrC</name>
    <name type="ordered locus">TGRD_747</name>
</gene>
<comment type="function">
    <text evidence="1">Catalyzes the reversible cyclization of carbamoyl aspartate to dihydroorotate.</text>
</comment>
<comment type="catalytic activity">
    <reaction evidence="1">
        <text>(S)-dihydroorotate + H2O = N-carbamoyl-L-aspartate + H(+)</text>
        <dbReference type="Rhea" id="RHEA:24296"/>
        <dbReference type="ChEBI" id="CHEBI:15377"/>
        <dbReference type="ChEBI" id="CHEBI:15378"/>
        <dbReference type="ChEBI" id="CHEBI:30864"/>
        <dbReference type="ChEBI" id="CHEBI:32814"/>
        <dbReference type="EC" id="3.5.2.3"/>
    </reaction>
</comment>
<comment type="cofactor">
    <cofactor evidence="1">
        <name>Zn(2+)</name>
        <dbReference type="ChEBI" id="CHEBI:29105"/>
    </cofactor>
    <text evidence="1">Binds 2 Zn(2+) ions per subunit.</text>
</comment>
<comment type="pathway">
    <text evidence="1">Pyrimidine metabolism; UMP biosynthesis via de novo pathway; (S)-dihydroorotate from bicarbonate: step 3/3.</text>
</comment>
<comment type="similarity">
    <text evidence="1">Belongs to the metallo-dependent hydrolases superfamily. DHOase family. Class I DHOase subfamily.</text>
</comment>
<dbReference type="EC" id="3.5.2.3" evidence="1"/>
<dbReference type="EMBL" id="AP009510">
    <property type="protein sequence ID" value="BAG14230.1"/>
    <property type="molecule type" value="Genomic_DNA"/>
</dbReference>
<dbReference type="RefSeq" id="WP_015423751.1">
    <property type="nucleotide sequence ID" value="NC_020419.1"/>
</dbReference>
<dbReference type="SMR" id="B1GYY7"/>
<dbReference type="STRING" id="471821.TGRD_747"/>
<dbReference type="KEGG" id="rsd:TGRD_747"/>
<dbReference type="PATRIC" id="fig|471821.5.peg.1285"/>
<dbReference type="HOGENOM" id="CLU_015572_1_0_0"/>
<dbReference type="UniPathway" id="UPA00070">
    <property type="reaction ID" value="UER00117"/>
</dbReference>
<dbReference type="Proteomes" id="UP000001691">
    <property type="component" value="Chromosome"/>
</dbReference>
<dbReference type="GO" id="GO:0005737">
    <property type="term" value="C:cytoplasm"/>
    <property type="evidence" value="ECO:0007669"/>
    <property type="project" value="TreeGrafter"/>
</dbReference>
<dbReference type="GO" id="GO:0004038">
    <property type="term" value="F:allantoinase activity"/>
    <property type="evidence" value="ECO:0007669"/>
    <property type="project" value="TreeGrafter"/>
</dbReference>
<dbReference type="GO" id="GO:0004151">
    <property type="term" value="F:dihydroorotase activity"/>
    <property type="evidence" value="ECO:0007669"/>
    <property type="project" value="UniProtKB-UniRule"/>
</dbReference>
<dbReference type="GO" id="GO:0008270">
    <property type="term" value="F:zinc ion binding"/>
    <property type="evidence" value="ECO:0007669"/>
    <property type="project" value="UniProtKB-UniRule"/>
</dbReference>
<dbReference type="GO" id="GO:0044205">
    <property type="term" value="P:'de novo' UMP biosynthetic process"/>
    <property type="evidence" value="ECO:0007669"/>
    <property type="project" value="UniProtKB-UniRule"/>
</dbReference>
<dbReference type="GO" id="GO:0006145">
    <property type="term" value="P:purine nucleobase catabolic process"/>
    <property type="evidence" value="ECO:0007669"/>
    <property type="project" value="TreeGrafter"/>
</dbReference>
<dbReference type="CDD" id="cd01317">
    <property type="entry name" value="DHOase_IIa"/>
    <property type="match status" value="1"/>
</dbReference>
<dbReference type="Gene3D" id="3.20.20.140">
    <property type="entry name" value="Metal-dependent hydrolases"/>
    <property type="match status" value="1"/>
</dbReference>
<dbReference type="Gene3D" id="2.30.40.10">
    <property type="entry name" value="Urease, subunit C, domain 1"/>
    <property type="match status" value="1"/>
</dbReference>
<dbReference type="HAMAP" id="MF_00220_B">
    <property type="entry name" value="PyrC_classI_B"/>
    <property type="match status" value="1"/>
</dbReference>
<dbReference type="InterPro" id="IPR006680">
    <property type="entry name" value="Amidohydro-rel"/>
</dbReference>
<dbReference type="InterPro" id="IPR004722">
    <property type="entry name" value="DHOase"/>
</dbReference>
<dbReference type="InterPro" id="IPR050138">
    <property type="entry name" value="DHOase/Allantoinase_Hydrolase"/>
</dbReference>
<dbReference type="InterPro" id="IPR002195">
    <property type="entry name" value="Dihydroorotase_CS"/>
</dbReference>
<dbReference type="InterPro" id="IPR011059">
    <property type="entry name" value="Metal-dep_hydrolase_composite"/>
</dbReference>
<dbReference type="InterPro" id="IPR032466">
    <property type="entry name" value="Metal_Hydrolase"/>
</dbReference>
<dbReference type="NCBIfam" id="TIGR00857">
    <property type="entry name" value="pyrC_multi"/>
    <property type="match status" value="1"/>
</dbReference>
<dbReference type="PANTHER" id="PTHR43668">
    <property type="entry name" value="ALLANTOINASE"/>
    <property type="match status" value="1"/>
</dbReference>
<dbReference type="PANTHER" id="PTHR43668:SF2">
    <property type="entry name" value="ALLANTOINASE"/>
    <property type="match status" value="1"/>
</dbReference>
<dbReference type="Pfam" id="PF01979">
    <property type="entry name" value="Amidohydro_1"/>
    <property type="match status" value="1"/>
</dbReference>
<dbReference type="SUPFAM" id="SSF51338">
    <property type="entry name" value="Composite domain of metallo-dependent hydrolases"/>
    <property type="match status" value="1"/>
</dbReference>
<dbReference type="SUPFAM" id="SSF51556">
    <property type="entry name" value="Metallo-dependent hydrolases"/>
    <property type="match status" value="1"/>
</dbReference>
<dbReference type="PROSITE" id="PS00483">
    <property type="entry name" value="DIHYDROOROTASE_2"/>
    <property type="match status" value="1"/>
</dbReference>
<protein>
    <recommendedName>
        <fullName evidence="1">Dihydroorotase</fullName>
        <shortName evidence="1">DHOase</shortName>
        <ecNumber evidence="1">3.5.2.3</ecNumber>
    </recommendedName>
</protein>